<feature type="chain" id="PRO_1000146784" description="Ribonuclease PH">
    <location>
        <begin position="1"/>
        <end position="261"/>
    </location>
</feature>
<feature type="binding site" evidence="1">
    <location>
        <position position="86"/>
    </location>
    <ligand>
        <name>phosphate</name>
        <dbReference type="ChEBI" id="CHEBI:43474"/>
        <note>substrate</note>
    </ligand>
</feature>
<feature type="binding site" evidence="1">
    <location>
        <begin position="124"/>
        <end position="126"/>
    </location>
    <ligand>
        <name>phosphate</name>
        <dbReference type="ChEBI" id="CHEBI:43474"/>
        <note>substrate</note>
    </ligand>
</feature>
<accession>C0QTN9</accession>
<gene>
    <name evidence="1" type="primary">rph</name>
    <name type="ordered locus">PERMA_0259</name>
</gene>
<keyword id="KW-0548">Nucleotidyltransferase</keyword>
<keyword id="KW-1185">Reference proteome</keyword>
<keyword id="KW-0694">RNA-binding</keyword>
<keyword id="KW-0698">rRNA processing</keyword>
<keyword id="KW-0808">Transferase</keyword>
<keyword id="KW-0819">tRNA processing</keyword>
<keyword id="KW-0820">tRNA-binding</keyword>
<organism>
    <name type="scientific">Persephonella marina (strain DSM 14350 / EX-H1)</name>
    <dbReference type="NCBI Taxonomy" id="123214"/>
    <lineage>
        <taxon>Bacteria</taxon>
        <taxon>Pseudomonadati</taxon>
        <taxon>Aquificota</taxon>
        <taxon>Aquificia</taxon>
        <taxon>Aquificales</taxon>
        <taxon>Hydrogenothermaceae</taxon>
        <taxon>Persephonella</taxon>
    </lineage>
</organism>
<comment type="function">
    <text evidence="1">Phosphorolytic 3'-5' exoribonuclease that plays an important role in tRNA 3'-end maturation. Removes nucleotide residues following the 3'-CCA terminus of tRNAs; can also add nucleotides to the ends of RNA molecules by using nucleoside diphosphates as substrates, but this may not be physiologically important. Probably plays a role in initiation of 16S rRNA degradation (leading to ribosome degradation) during starvation.</text>
</comment>
<comment type="catalytic activity">
    <reaction evidence="1">
        <text>tRNA(n+1) + phosphate = tRNA(n) + a ribonucleoside 5'-diphosphate</text>
        <dbReference type="Rhea" id="RHEA:10628"/>
        <dbReference type="Rhea" id="RHEA-COMP:17343"/>
        <dbReference type="Rhea" id="RHEA-COMP:17344"/>
        <dbReference type="ChEBI" id="CHEBI:43474"/>
        <dbReference type="ChEBI" id="CHEBI:57930"/>
        <dbReference type="ChEBI" id="CHEBI:173114"/>
        <dbReference type="EC" id="2.7.7.56"/>
    </reaction>
</comment>
<comment type="subunit">
    <text evidence="1">Homohexameric ring arranged as a trimer of dimers.</text>
</comment>
<comment type="similarity">
    <text evidence="1">Belongs to the RNase PH family.</text>
</comment>
<proteinExistence type="inferred from homology"/>
<name>RNPH_PERMH</name>
<protein>
    <recommendedName>
        <fullName evidence="1">Ribonuclease PH</fullName>
        <shortName evidence="1">RNase PH</shortName>
        <ecNumber evidence="1">2.7.7.56</ecNumber>
    </recommendedName>
    <alternativeName>
        <fullName evidence="1">tRNA nucleotidyltransferase</fullName>
    </alternativeName>
</protein>
<evidence type="ECO:0000255" key="1">
    <source>
        <dbReference type="HAMAP-Rule" id="MF_00564"/>
    </source>
</evidence>
<dbReference type="EC" id="2.7.7.56" evidence="1"/>
<dbReference type="EMBL" id="CP001230">
    <property type="protein sequence ID" value="ACO04619.1"/>
    <property type="molecule type" value="Genomic_DNA"/>
</dbReference>
<dbReference type="RefSeq" id="WP_012676856.1">
    <property type="nucleotide sequence ID" value="NC_012440.1"/>
</dbReference>
<dbReference type="SMR" id="C0QTN9"/>
<dbReference type="STRING" id="123214.PERMA_0259"/>
<dbReference type="PaxDb" id="123214-PERMA_0259"/>
<dbReference type="KEGG" id="pmx:PERMA_0259"/>
<dbReference type="eggNOG" id="COG0689">
    <property type="taxonomic scope" value="Bacteria"/>
</dbReference>
<dbReference type="HOGENOM" id="CLU_050858_0_0_0"/>
<dbReference type="OrthoDB" id="9807456at2"/>
<dbReference type="Proteomes" id="UP000001366">
    <property type="component" value="Chromosome"/>
</dbReference>
<dbReference type="GO" id="GO:0000175">
    <property type="term" value="F:3'-5'-RNA exonuclease activity"/>
    <property type="evidence" value="ECO:0007669"/>
    <property type="project" value="UniProtKB-UniRule"/>
</dbReference>
<dbReference type="GO" id="GO:0000049">
    <property type="term" value="F:tRNA binding"/>
    <property type="evidence" value="ECO:0007669"/>
    <property type="project" value="UniProtKB-UniRule"/>
</dbReference>
<dbReference type="GO" id="GO:0009022">
    <property type="term" value="F:tRNA nucleotidyltransferase activity"/>
    <property type="evidence" value="ECO:0007669"/>
    <property type="project" value="UniProtKB-UniRule"/>
</dbReference>
<dbReference type="GO" id="GO:0016075">
    <property type="term" value="P:rRNA catabolic process"/>
    <property type="evidence" value="ECO:0007669"/>
    <property type="project" value="UniProtKB-UniRule"/>
</dbReference>
<dbReference type="GO" id="GO:0006364">
    <property type="term" value="P:rRNA processing"/>
    <property type="evidence" value="ECO:0007669"/>
    <property type="project" value="UniProtKB-KW"/>
</dbReference>
<dbReference type="GO" id="GO:0008033">
    <property type="term" value="P:tRNA processing"/>
    <property type="evidence" value="ECO:0007669"/>
    <property type="project" value="UniProtKB-UniRule"/>
</dbReference>
<dbReference type="CDD" id="cd11362">
    <property type="entry name" value="RNase_PH_bact"/>
    <property type="match status" value="1"/>
</dbReference>
<dbReference type="FunFam" id="3.30.230.70:FF:000003">
    <property type="entry name" value="Ribonuclease PH"/>
    <property type="match status" value="1"/>
</dbReference>
<dbReference type="Gene3D" id="3.30.230.70">
    <property type="entry name" value="GHMP Kinase, N-terminal domain"/>
    <property type="match status" value="1"/>
</dbReference>
<dbReference type="HAMAP" id="MF_00564">
    <property type="entry name" value="RNase_PH"/>
    <property type="match status" value="1"/>
</dbReference>
<dbReference type="InterPro" id="IPR001247">
    <property type="entry name" value="ExoRNase_PH_dom1"/>
</dbReference>
<dbReference type="InterPro" id="IPR015847">
    <property type="entry name" value="ExoRNase_PH_dom2"/>
</dbReference>
<dbReference type="InterPro" id="IPR036345">
    <property type="entry name" value="ExoRNase_PH_dom2_sf"/>
</dbReference>
<dbReference type="InterPro" id="IPR027408">
    <property type="entry name" value="PNPase/RNase_PH_dom_sf"/>
</dbReference>
<dbReference type="InterPro" id="IPR020568">
    <property type="entry name" value="Ribosomal_Su5_D2-typ_SF"/>
</dbReference>
<dbReference type="InterPro" id="IPR050080">
    <property type="entry name" value="RNase_PH"/>
</dbReference>
<dbReference type="InterPro" id="IPR002381">
    <property type="entry name" value="RNase_PH_bac-type"/>
</dbReference>
<dbReference type="InterPro" id="IPR018336">
    <property type="entry name" value="RNase_PH_CS"/>
</dbReference>
<dbReference type="NCBIfam" id="TIGR01966">
    <property type="entry name" value="RNasePH"/>
    <property type="match status" value="1"/>
</dbReference>
<dbReference type="PANTHER" id="PTHR11953">
    <property type="entry name" value="EXOSOME COMPLEX COMPONENT"/>
    <property type="match status" value="1"/>
</dbReference>
<dbReference type="PANTHER" id="PTHR11953:SF0">
    <property type="entry name" value="EXOSOME COMPLEX COMPONENT RRP41"/>
    <property type="match status" value="1"/>
</dbReference>
<dbReference type="Pfam" id="PF01138">
    <property type="entry name" value="RNase_PH"/>
    <property type="match status" value="1"/>
</dbReference>
<dbReference type="Pfam" id="PF03725">
    <property type="entry name" value="RNase_PH_C"/>
    <property type="match status" value="1"/>
</dbReference>
<dbReference type="SUPFAM" id="SSF55666">
    <property type="entry name" value="Ribonuclease PH domain 2-like"/>
    <property type="match status" value="1"/>
</dbReference>
<dbReference type="SUPFAM" id="SSF54211">
    <property type="entry name" value="Ribosomal protein S5 domain 2-like"/>
    <property type="match status" value="1"/>
</dbReference>
<dbReference type="PROSITE" id="PS01277">
    <property type="entry name" value="RIBONUCLEASE_PH"/>
    <property type="match status" value="1"/>
</dbReference>
<reference key="1">
    <citation type="journal article" date="2009" name="J. Bacteriol.">
        <title>Complete and draft genome sequences of six members of the Aquificales.</title>
        <authorList>
            <person name="Reysenbach A.-L."/>
            <person name="Hamamura N."/>
            <person name="Podar M."/>
            <person name="Griffiths E."/>
            <person name="Ferreira S."/>
            <person name="Hochstein R."/>
            <person name="Heidelberg J."/>
            <person name="Johnson J."/>
            <person name="Mead D."/>
            <person name="Pohorille A."/>
            <person name="Sarmiento M."/>
            <person name="Schweighofer K."/>
            <person name="Seshadri R."/>
            <person name="Voytek M.A."/>
        </authorList>
    </citation>
    <scope>NUCLEOTIDE SEQUENCE [LARGE SCALE GENOMIC DNA]</scope>
    <source>
        <strain>DSM 14350 / EX-H1</strain>
    </source>
</reference>
<sequence>MRPDGRKPTQLRPVKIIRDFNIYAEGSVLIEMGNTKVIITASIEEKVPPFLRGTGQGWITAEYAMLPRSTESRSIREVVRGAPSGRTQEIQRLIGRSLRGVVDLKKLGERTLWVDCDVIQADGGTRVASITGAFIAVADAMIKLTESGKVRQNPLKDYVAAISTGIVGNEVVLDLNFKEDSSAKVDMNLVMTGSGNFVEVQATGEEYSFTQQEFDKMLEYGKLGINKLIHIQKKFIEGMPSIGHWKRLSIKEFSYTDTGGN</sequence>